<comment type="catalytic activity">
    <reaction>
        <text>O-acetyl-L-serine + hydrogen sulfide = L-cysteine + acetate</text>
        <dbReference type="Rhea" id="RHEA:14829"/>
        <dbReference type="ChEBI" id="CHEBI:29919"/>
        <dbReference type="ChEBI" id="CHEBI:30089"/>
        <dbReference type="ChEBI" id="CHEBI:35235"/>
        <dbReference type="ChEBI" id="CHEBI:58340"/>
        <dbReference type="EC" id="2.5.1.47"/>
    </reaction>
</comment>
<comment type="cofactor">
    <cofactor evidence="1">
        <name>pyridoxal 5'-phosphate</name>
        <dbReference type="ChEBI" id="CHEBI:597326"/>
    </cofactor>
</comment>
<comment type="pathway">
    <text>Amino-acid biosynthesis; L-cysteine biosynthesis; L-cysteine from L-serine: step 2/2.</text>
</comment>
<comment type="subunit">
    <text evidence="1">Homodimer.</text>
</comment>
<comment type="subcellular location">
    <subcellularLocation>
        <location evidence="1">Cytoplasm</location>
    </subcellularLocation>
</comment>
<comment type="similarity">
    <text evidence="3">Belongs to the cysteine synthase/cystathionine beta-synthase family.</text>
</comment>
<protein>
    <recommendedName>
        <fullName>Cysteine synthase</fullName>
        <shortName>CSase</shortName>
        <ecNumber>2.5.1.47</ecNumber>
    </recommendedName>
    <alternativeName>
        <fullName>O-acetylserine (thiol)-lyase</fullName>
        <shortName>OAS-TL</shortName>
    </alternativeName>
    <alternativeName>
        <fullName>O-acetylserine sulfhydrylase</fullName>
    </alternativeName>
    <alternativeName>
        <fullName>OAS-TL4</fullName>
    </alternativeName>
</protein>
<accession>O23733</accession>
<sequence length="322" mass="33902">MASRIAKDVTELIGNTPLVYLNNVAEGCVGRVAAKLEMMEPCSSVKDRIGFSMISDAEQKGLIKPGESVLIEPTSGNTGVGLAFTAAAKGYKLIITMPASMSVERRIILLAFGVELVLTDPAKGMKGAIAKAEEILAKTPNGYMLQQFENPANPKIHYETTGPEIWKGTDGKIDGFVSGIGTGGTITGAGKYLKEQNPNVKLYGVEPIESAILSGGKPGPHKIQGIGAGFIPSVLEVDLIDEVVQVSSDESIDMARLLALKEGLLVGISSGAAAAAAIKLAKRPENAGKLFVAVFPSFGERYLSTVLFDATRKEAESMTFQA</sequence>
<feature type="initiator methionine" description="Removed" evidence="2">
    <location>
        <position position="1"/>
    </location>
</feature>
<feature type="chain" id="PRO_0000167117" description="Cysteine synthase">
    <location>
        <begin position="2"/>
        <end position="322"/>
    </location>
</feature>
<feature type="binding site" evidence="1">
    <location>
        <position position="77"/>
    </location>
    <ligand>
        <name>pyridoxal 5'-phosphate</name>
        <dbReference type="ChEBI" id="CHEBI:597326"/>
    </ligand>
</feature>
<feature type="binding site" evidence="1">
    <location>
        <begin position="181"/>
        <end position="185"/>
    </location>
    <ligand>
        <name>pyridoxal 5'-phosphate</name>
        <dbReference type="ChEBI" id="CHEBI:597326"/>
    </ligand>
</feature>
<feature type="binding site" evidence="1">
    <location>
        <position position="269"/>
    </location>
    <ligand>
        <name>pyridoxal 5'-phosphate</name>
        <dbReference type="ChEBI" id="CHEBI:597326"/>
    </ligand>
</feature>
<feature type="modified residue" description="N-acetylalanine" evidence="2">
    <location>
        <position position="2"/>
    </location>
</feature>
<feature type="modified residue" description="N6-(pyridoxal phosphate)lysine" evidence="1">
    <location>
        <position position="46"/>
    </location>
</feature>
<feature type="modified residue" description="Phosphoserine" evidence="2">
    <location>
        <position position="178"/>
    </location>
</feature>
<evidence type="ECO:0000250" key="1"/>
<evidence type="ECO:0000250" key="2">
    <source>
        <dbReference type="UniProtKB" id="P47998"/>
    </source>
</evidence>
<evidence type="ECO:0000305" key="3"/>
<proteinExistence type="evidence at transcript level"/>
<dbReference type="EC" id="2.5.1.47"/>
<dbReference type="EMBL" id="Y10845">
    <property type="protein sequence ID" value="CAA71798.1"/>
    <property type="molecule type" value="mRNA"/>
</dbReference>
<dbReference type="SMR" id="O23733"/>
<dbReference type="UniPathway" id="UPA00136">
    <property type="reaction ID" value="UER00200"/>
</dbReference>
<dbReference type="GO" id="GO:0005737">
    <property type="term" value="C:cytoplasm"/>
    <property type="evidence" value="ECO:0007669"/>
    <property type="project" value="UniProtKB-SubCell"/>
</dbReference>
<dbReference type="GO" id="GO:0004124">
    <property type="term" value="F:cysteine synthase activity"/>
    <property type="evidence" value="ECO:0007669"/>
    <property type="project" value="UniProtKB-EC"/>
</dbReference>
<dbReference type="GO" id="GO:0006535">
    <property type="term" value="P:cysteine biosynthetic process from serine"/>
    <property type="evidence" value="ECO:0007669"/>
    <property type="project" value="InterPro"/>
</dbReference>
<dbReference type="CDD" id="cd01561">
    <property type="entry name" value="CBS_like"/>
    <property type="match status" value="1"/>
</dbReference>
<dbReference type="FunFam" id="3.40.50.1100:FF:000006">
    <property type="entry name" value="Cysteine synthase"/>
    <property type="match status" value="1"/>
</dbReference>
<dbReference type="FunFam" id="3.40.50.1100:FF:000130">
    <property type="entry name" value="Cysteine synthase"/>
    <property type="match status" value="1"/>
</dbReference>
<dbReference type="Gene3D" id="3.40.50.1100">
    <property type="match status" value="2"/>
</dbReference>
<dbReference type="InterPro" id="IPR005856">
    <property type="entry name" value="Cys_synth"/>
</dbReference>
<dbReference type="InterPro" id="IPR050214">
    <property type="entry name" value="Cys_Synth/Cystath_Beta-Synth"/>
</dbReference>
<dbReference type="InterPro" id="IPR005859">
    <property type="entry name" value="CysK"/>
</dbReference>
<dbReference type="InterPro" id="IPR001216">
    <property type="entry name" value="P-phosphate_BS"/>
</dbReference>
<dbReference type="InterPro" id="IPR001926">
    <property type="entry name" value="TrpB-like_PALP"/>
</dbReference>
<dbReference type="InterPro" id="IPR036052">
    <property type="entry name" value="TrpB-like_PALP_sf"/>
</dbReference>
<dbReference type="NCBIfam" id="TIGR01139">
    <property type="entry name" value="cysK"/>
    <property type="match status" value="1"/>
</dbReference>
<dbReference type="NCBIfam" id="TIGR01136">
    <property type="entry name" value="cysKM"/>
    <property type="match status" value="1"/>
</dbReference>
<dbReference type="PANTHER" id="PTHR10314">
    <property type="entry name" value="CYSTATHIONINE BETA-SYNTHASE"/>
    <property type="match status" value="1"/>
</dbReference>
<dbReference type="Pfam" id="PF00291">
    <property type="entry name" value="PALP"/>
    <property type="match status" value="1"/>
</dbReference>
<dbReference type="SUPFAM" id="SSF53686">
    <property type="entry name" value="Tryptophan synthase beta subunit-like PLP-dependent enzymes"/>
    <property type="match status" value="1"/>
</dbReference>
<dbReference type="PROSITE" id="PS00901">
    <property type="entry name" value="CYS_SYNTHASE"/>
    <property type="match status" value="1"/>
</dbReference>
<name>CYSK1_BRAJU</name>
<organism>
    <name type="scientific">Brassica juncea</name>
    <name type="common">Indian mustard</name>
    <name type="synonym">Sinapis juncea</name>
    <dbReference type="NCBI Taxonomy" id="3707"/>
    <lineage>
        <taxon>Eukaryota</taxon>
        <taxon>Viridiplantae</taxon>
        <taxon>Streptophyta</taxon>
        <taxon>Embryophyta</taxon>
        <taxon>Tracheophyta</taxon>
        <taxon>Spermatophyta</taxon>
        <taxon>Magnoliopsida</taxon>
        <taxon>eudicotyledons</taxon>
        <taxon>Gunneridae</taxon>
        <taxon>Pentapetalae</taxon>
        <taxon>rosids</taxon>
        <taxon>malvids</taxon>
        <taxon>Brassicales</taxon>
        <taxon>Brassicaceae</taxon>
        <taxon>Brassiceae</taxon>
        <taxon>Brassica</taxon>
    </lineage>
</organism>
<reference key="1">
    <citation type="journal article" date="1998" name="Plant Mol. Biol.">
        <title>cDNA cloning and expression analysis of genes encoding GSH synthesis in roots of the heavy-metal accumulator Brassica juncea L.: evidence for Cd-induction of a putative mitochondrial gamma-glutamylcysteine synthetase isoform.</title>
        <authorList>
            <person name="Schaefer H.J."/>
            <person name="Haag-Kerwer A."/>
            <person name="Rausch T.H."/>
        </authorList>
    </citation>
    <scope>NUCLEOTIDE SEQUENCE [MRNA]</scope>
    <source>
        <strain>cv. Vittasso</strain>
        <tissue>Root</tissue>
    </source>
</reference>
<keyword id="KW-0007">Acetylation</keyword>
<keyword id="KW-0028">Amino-acid biosynthesis</keyword>
<keyword id="KW-0198">Cysteine biosynthesis</keyword>
<keyword id="KW-0963">Cytoplasm</keyword>
<keyword id="KW-0597">Phosphoprotein</keyword>
<keyword id="KW-0663">Pyridoxal phosphate</keyword>
<keyword id="KW-0808">Transferase</keyword>